<dbReference type="EC" id="2.1.1.144" evidence="1"/>
<dbReference type="EMBL" id="CP000656">
    <property type="protein sequence ID" value="ABP42810.1"/>
    <property type="molecule type" value="Genomic_DNA"/>
</dbReference>
<dbReference type="SMR" id="A4T0W0"/>
<dbReference type="KEGG" id="mgi:Mflv_0316"/>
<dbReference type="eggNOG" id="COG4106">
    <property type="taxonomic scope" value="Bacteria"/>
</dbReference>
<dbReference type="HOGENOM" id="CLU_037990_5_2_11"/>
<dbReference type="OrthoDB" id="9795085at2"/>
<dbReference type="GO" id="GO:0005737">
    <property type="term" value="C:cytoplasm"/>
    <property type="evidence" value="ECO:0007669"/>
    <property type="project" value="UniProtKB-SubCell"/>
</dbReference>
<dbReference type="GO" id="GO:0030798">
    <property type="term" value="F:trans-aconitate 2-methyltransferase activity"/>
    <property type="evidence" value="ECO:0007669"/>
    <property type="project" value="UniProtKB-UniRule"/>
</dbReference>
<dbReference type="GO" id="GO:0032259">
    <property type="term" value="P:methylation"/>
    <property type="evidence" value="ECO:0007669"/>
    <property type="project" value="UniProtKB-KW"/>
</dbReference>
<dbReference type="CDD" id="cd02440">
    <property type="entry name" value="AdoMet_MTases"/>
    <property type="match status" value="1"/>
</dbReference>
<dbReference type="Gene3D" id="1.10.150.290">
    <property type="entry name" value="S-adenosyl-L-methionine-dependent methyltransferases"/>
    <property type="match status" value="1"/>
</dbReference>
<dbReference type="Gene3D" id="3.40.50.150">
    <property type="entry name" value="Vaccinia Virus protein VP39"/>
    <property type="match status" value="1"/>
</dbReference>
<dbReference type="HAMAP" id="MF_00560">
    <property type="entry name" value="Tran_acon_Me_trans"/>
    <property type="match status" value="1"/>
</dbReference>
<dbReference type="InterPro" id="IPR029063">
    <property type="entry name" value="SAM-dependent_MTases_sf"/>
</dbReference>
<dbReference type="InterPro" id="IPR023506">
    <property type="entry name" value="Trans-aconitate_MeTrfase"/>
</dbReference>
<dbReference type="InterPro" id="IPR023149">
    <property type="entry name" value="Trans_acon_MeTrfase_C"/>
</dbReference>
<dbReference type="NCBIfam" id="NF010703">
    <property type="entry name" value="PRK14103.1"/>
    <property type="match status" value="1"/>
</dbReference>
<dbReference type="PANTHER" id="PTHR43861:SF1">
    <property type="entry name" value="TRANS-ACONITATE 2-METHYLTRANSFERASE"/>
    <property type="match status" value="1"/>
</dbReference>
<dbReference type="PANTHER" id="PTHR43861">
    <property type="entry name" value="TRANS-ACONITATE 2-METHYLTRANSFERASE-RELATED"/>
    <property type="match status" value="1"/>
</dbReference>
<dbReference type="Pfam" id="PF13489">
    <property type="entry name" value="Methyltransf_23"/>
    <property type="match status" value="1"/>
</dbReference>
<dbReference type="SUPFAM" id="SSF53335">
    <property type="entry name" value="S-adenosyl-L-methionine-dependent methyltransferases"/>
    <property type="match status" value="1"/>
</dbReference>
<protein>
    <recommendedName>
        <fullName evidence="1">Trans-aconitate 2-methyltransferase</fullName>
        <ecNumber evidence="1">2.1.1.144</ecNumber>
    </recommendedName>
</protein>
<proteinExistence type="inferred from homology"/>
<name>TAM_MYCGI</name>
<reference key="1">
    <citation type="submission" date="2007-04" db="EMBL/GenBank/DDBJ databases">
        <title>Complete sequence of chromosome of Mycobacterium gilvum PYR-GCK.</title>
        <authorList>
            <consortium name="US DOE Joint Genome Institute"/>
            <person name="Copeland A."/>
            <person name="Lucas S."/>
            <person name="Lapidus A."/>
            <person name="Barry K."/>
            <person name="Detter J.C."/>
            <person name="Glavina del Rio T."/>
            <person name="Hammon N."/>
            <person name="Israni S."/>
            <person name="Dalin E."/>
            <person name="Tice H."/>
            <person name="Pitluck S."/>
            <person name="Chain P."/>
            <person name="Malfatti S."/>
            <person name="Shin M."/>
            <person name="Vergez L."/>
            <person name="Schmutz J."/>
            <person name="Larimer F."/>
            <person name="Land M."/>
            <person name="Hauser L."/>
            <person name="Kyrpides N."/>
            <person name="Mikhailova N."/>
            <person name="Miller C."/>
            <person name="Richardson P."/>
        </authorList>
    </citation>
    <scope>NUCLEOTIDE SEQUENCE [LARGE SCALE GENOMIC DNA]</scope>
    <source>
        <strain>PYR-GCK</strain>
    </source>
</reference>
<organism>
    <name type="scientific">Mycolicibacterium gilvum (strain PYR-GCK)</name>
    <name type="common">Mycobacterium gilvum (strain PYR-GCK)</name>
    <dbReference type="NCBI Taxonomy" id="350054"/>
    <lineage>
        <taxon>Bacteria</taxon>
        <taxon>Bacillati</taxon>
        <taxon>Actinomycetota</taxon>
        <taxon>Actinomycetes</taxon>
        <taxon>Mycobacteriales</taxon>
        <taxon>Mycobacteriaceae</taxon>
        <taxon>Mycolicibacterium</taxon>
    </lineage>
</organism>
<feature type="chain" id="PRO_1000082274" description="Trans-aconitate 2-methyltransferase">
    <location>
        <begin position="1"/>
        <end position="255"/>
    </location>
</feature>
<evidence type="ECO:0000255" key="1">
    <source>
        <dbReference type="HAMAP-Rule" id="MF_00560"/>
    </source>
</evidence>
<accession>A4T0W0</accession>
<comment type="function">
    <text evidence="1">Catalyzes the S-adenosylmethionine monomethyl esterification of trans-aconitate.</text>
</comment>
<comment type="catalytic activity">
    <reaction evidence="1">
        <text>trans-aconitate + S-adenosyl-L-methionine = (E)-3-(methoxycarbonyl)pent-2-enedioate + S-adenosyl-L-homocysteine</text>
        <dbReference type="Rhea" id="RHEA:14969"/>
        <dbReference type="ChEBI" id="CHEBI:15708"/>
        <dbReference type="ChEBI" id="CHEBI:57470"/>
        <dbReference type="ChEBI" id="CHEBI:57856"/>
        <dbReference type="ChEBI" id="CHEBI:59789"/>
        <dbReference type="EC" id="2.1.1.144"/>
    </reaction>
</comment>
<comment type="subcellular location">
    <subcellularLocation>
        <location evidence="1">Cytoplasm</location>
    </subcellularLocation>
</comment>
<comment type="similarity">
    <text evidence="1">Belongs to the methyltransferase superfamily. Tam family.</text>
</comment>
<gene>
    <name evidence="1" type="primary">tam</name>
    <name type="ordered locus">Mflv_0316</name>
</gene>
<sequence>MWNPAVYLTYADHRGRPYYDLLSRVDAREPRRIVDLGCGPGNLTRTLTQRWPGAVVEAWDSSEEMVTAARERGVDARVGDVRDWAPLPDTDVVVSNATLHWVPEHPDLLLRWAGQLRAGSWIAFQVPGNFDAPSHRAVRDLVSSARWAHLLRDFPFEKSEVVRPAAGYAELLTDAGCTVDAWETTYVHELTGEKPVLEWIGGTALRPVRAALPDHDWQEFRAELIPLLDAAYPRRADGITFFPFRRIFVVARVKN</sequence>
<keyword id="KW-0963">Cytoplasm</keyword>
<keyword id="KW-0489">Methyltransferase</keyword>
<keyword id="KW-0949">S-adenosyl-L-methionine</keyword>
<keyword id="KW-0808">Transferase</keyword>